<organism>
    <name type="scientific">Homo sapiens</name>
    <name type="common">Human</name>
    <dbReference type="NCBI Taxonomy" id="9606"/>
    <lineage>
        <taxon>Eukaryota</taxon>
        <taxon>Metazoa</taxon>
        <taxon>Chordata</taxon>
        <taxon>Craniata</taxon>
        <taxon>Vertebrata</taxon>
        <taxon>Euteleostomi</taxon>
        <taxon>Mammalia</taxon>
        <taxon>Eutheria</taxon>
        <taxon>Euarchontoglires</taxon>
        <taxon>Primates</taxon>
        <taxon>Haplorrhini</taxon>
        <taxon>Catarrhini</taxon>
        <taxon>Hominidae</taxon>
        <taxon>Homo</taxon>
    </lineage>
</organism>
<protein>
    <recommendedName>
        <fullName>Nuclear receptor subfamily 4 group A member 2</fullName>
    </recommendedName>
    <alternativeName>
        <fullName>Immediate-early response protein NOT</fullName>
    </alternativeName>
    <alternativeName>
        <fullName>Orphan nuclear receptor NURR1</fullName>
    </alternativeName>
    <alternativeName>
        <fullName>Transcriptionally-inducible nuclear receptor</fullName>
    </alternativeName>
</protein>
<evidence type="ECO:0000250" key="1"/>
<evidence type="ECO:0000250" key="2">
    <source>
        <dbReference type="UniProtKB" id="Q06219"/>
    </source>
</evidence>
<evidence type="ECO:0000255" key="3">
    <source>
        <dbReference type="PROSITE-ProRule" id="PRU00407"/>
    </source>
</evidence>
<evidence type="ECO:0000255" key="4">
    <source>
        <dbReference type="PROSITE-ProRule" id="PRU01189"/>
    </source>
</evidence>
<evidence type="ECO:0000256" key="5">
    <source>
        <dbReference type="SAM" id="MobiDB-lite"/>
    </source>
</evidence>
<evidence type="ECO:0000269" key="6">
    <source>
    </source>
</evidence>
<evidence type="ECO:0000269" key="7">
    <source>
    </source>
</evidence>
<evidence type="ECO:0000269" key="8">
    <source>
    </source>
</evidence>
<evidence type="ECO:0000269" key="9">
    <source>
    </source>
</evidence>
<evidence type="ECO:0000269" key="10">
    <source>
    </source>
</evidence>
<evidence type="ECO:0000269" key="11">
    <source>
    </source>
</evidence>
<evidence type="ECO:0000269" key="12">
    <source>
    </source>
</evidence>
<evidence type="ECO:0000269" key="13">
    <source>
    </source>
</evidence>
<evidence type="ECO:0000303" key="14">
    <source>
    </source>
</evidence>
<evidence type="ECO:0000303" key="15">
    <source>
    </source>
</evidence>
<evidence type="ECO:0000305" key="16"/>
<evidence type="ECO:0007829" key="17">
    <source>
        <dbReference type="PDB" id="1OVL"/>
    </source>
</evidence>
<evidence type="ECO:0007829" key="18">
    <source>
        <dbReference type="PDB" id="5Y41"/>
    </source>
</evidence>
<evidence type="ECO:0007829" key="19">
    <source>
        <dbReference type="PDB" id="6L6Q"/>
    </source>
</evidence>
<dbReference type="EMBL" id="X75918">
    <property type="protein sequence ID" value="CAA53518.1"/>
    <property type="molecule type" value="mRNA"/>
</dbReference>
<dbReference type="EMBL" id="AB017586">
    <property type="protein sequence ID" value="BAA75666.1"/>
    <property type="molecule type" value="Genomic_DNA"/>
</dbReference>
<dbReference type="EMBL" id="AB019433">
    <property type="protein sequence ID" value="BAA77328.1"/>
    <property type="molecule type" value="Genomic_DNA"/>
</dbReference>
<dbReference type="EMBL" id="AK291456">
    <property type="protein sequence ID" value="BAF84145.1"/>
    <property type="molecule type" value="mRNA"/>
</dbReference>
<dbReference type="EMBL" id="AC074099">
    <property type="protein sequence ID" value="AAY24203.1"/>
    <property type="molecule type" value="Genomic_DNA"/>
</dbReference>
<dbReference type="EMBL" id="CH471058">
    <property type="protein sequence ID" value="EAX11454.1"/>
    <property type="molecule type" value="Genomic_DNA"/>
</dbReference>
<dbReference type="EMBL" id="CH471058">
    <property type="protein sequence ID" value="EAX11455.1"/>
    <property type="molecule type" value="Genomic_DNA"/>
</dbReference>
<dbReference type="EMBL" id="BC009288">
    <property type="protein sequence ID" value="AAH09288.1"/>
    <property type="molecule type" value="mRNA"/>
</dbReference>
<dbReference type="EMBL" id="BC066890">
    <property type="protein sequence ID" value="AAH66890.1"/>
    <property type="molecule type" value="mRNA"/>
</dbReference>
<dbReference type="EMBL" id="S77154">
    <property type="protein sequence ID" value="AAB33999.1"/>
    <property type="molecule type" value="mRNA"/>
</dbReference>
<dbReference type="CCDS" id="CCDS2201.1">
    <molecule id="P43354-1"/>
</dbReference>
<dbReference type="CCDS" id="CCDS86887.1">
    <molecule id="P43354-2"/>
</dbReference>
<dbReference type="PIR" id="A57040">
    <property type="entry name" value="A57040"/>
</dbReference>
<dbReference type="RefSeq" id="NP_006177.1">
    <molecule id="P43354-1"/>
    <property type="nucleotide sequence ID" value="NM_006186.4"/>
</dbReference>
<dbReference type="RefSeq" id="NP_775265.1">
    <molecule id="P43354-2"/>
    <property type="nucleotide sequence ID" value="NM_173173.3"/>
</dbReference>
<dbReference type="RefSeq" id="XP_005246679.1">
    <property type="nucleotide sequence ID" value="XM_005246622.3"/>
</dbReference>
<dbReference type="RefSeq" id="XP_016859708.1">
    <property type="nucleotide sequence ID" value="XM_017004219.1"/>
</dbReference>
<dbReference type="RefSeq" id="XP_047300507.1">
    <molecule id="P43354-1"/>
    <property type="nucleotide sequence ID" value="XM_047444551.1"/>
</dbReference>
<dbReference type="RefSeq" id="XP_047300513.1">
    <molecule id="P43354-2"/>
    <property type="nucleotide sequence ID" value="XM_047444557.1"/>
</dbReference>
<dbReference type="PDB" id="1OVL">
    <property type="method" value="X-ray"/>
    <property type="resolution" value="2.20 A"/>
    <property type="chains" value="A/B/C/D/E/F=328-598"/>
</dbReference>
<dbReference type="PDB" id="5Y41">
    <property type="method" value="X-ray"/>
    <property type="resolution" value="2.05 A"/>
    <property type="chains" value="A/B=328-598"/>
</dbReference>
<dbReference type="PDB" id="5YD6">
    <property type="method" value="X-ray"/>
    <property type="resolution" value="2.34 A"/>
    <property type="chains" value="A/B/C/D=328-598"/>
</dbReference>
<dbReference type="PDB" id="6DDA">
    <property type="method" value="X-ray"/>
    <property type="resolution" value="3.20 A"/>
    <property type="chains" value="A/B/C=328-598"/>
</dbReference>
<dbReference type="PDB" id="6L6L">
    <property type="method" value="X-ray"/>
    <property type="resolution" value="2.78 A"/>
    <property type="chains" value="A/B=262-346"/>
</dbReference>
<dbReference type="PDB" id="6L6Q">
    <property type="method" value="X-ray"/>
    <property type="resolution" value="2.60 A"/>
    <property type="chains" value="A/B=262-346"/>
</dbReference>
<dbReference type="PDB" id="7WNH">
    <property type="method" value="X-ray"/>
    <property type="resolution" value="3.10 A"/>
    <property type="chains" value="A/B/C/D=258-598"/>
</dbReference>
<dbReference type="PDB" id="8CYO">
    <property type="method" value="X-ray"/>
    <property type="resolution" value="2.41 A"/>
    <property type="chains" value="A/B=363-598"/>
</dbReference>
<dbReference type="PDBsum" id="1OVL"/>
<dbReference type="PDBsum" id="5Y41"/>
<dbReference type="PDBsum" id="5YD6"/>
<dbReference type="PDBsum" id="6DDA"/>
<dbReference type="PDBsum" id="6L6L"/>
<dbReference type="PDBsum" id="6L6Q"/>
<dbReference type="PDBsum" id="7WNH"/>
<dbReference type="PDBsum" id="8CYO"/>
<dbReference type="BMRB" id="P43354"/>
<dbReference type="SMR" id="P43354"/>
<dbReference type="BioGRID" id="110983">
    <property type="interactions" value="22"/>
</dbReference>
<dbReference type="CORUM" id="P43354"/>
<dbReference type="FunCoup" id="P43354">
    <property type="interactions" value="933"/>
</dbReference>
<dbReference type="IntAct" id="P43354">
    <property type="interactions" value="19"/>
</dbReference>
<dbReference type="STRING" id="9606.ENSP00000344479"/>
<dbReference type="BindingDB" id="P43354"/>
<dbReference type="ChEMBL" id="CHEMBL5002"/>
<dbReference type="DrugCentral" id="P43354"/>
<dbReference type="GuidetoPHARMACOLOGY" id="630"/>
<dbReference type="GlyGen" id="P43354">
    <property type="glycosylation" value="2 sites"/>
</dbReference>
<dbReference type="iPTMnet" id="P43354"/>
<dbReference type="PhosphoSitePlus" id="P43354"/>
<dbReference type="SwissPalm" id="P43354"/>
<dbReference type="BioMuta" id="NR4A2"/>
<dbReference type="DMDM" id="1171750"/>
<dbReference type="jPOST" id="P43354"/>
<dbReference type="MassIVE" id="P43354"/>
<dbReference type="PaxDb" id="9606-ENSP00000344479"/>
<dbReference type="PeptideAtlas" id="P43354"/>
<dbReference type="ProteomicsDB" id="55616">
    <molecule id="P43354-1"/>
</dbReference>
<dbReference type="ProteomicsDB" id="66777"/>
<dbReference type="Antibodypedia" id="621">
    <property type="antibodies" value="432 antibodies from 40 providers"/>
</dbReference>
<dbReference type="DNASU" id="4929"/>
<dbReference type="Ensembl" id="ENST00000339562.9">
    <molecule id="P43354-1"/>
    <property type="protein sequence ID" value="ENSP00000344479.4"/>
    <property type="gene ID" value="ENSG00000153234.16"/>
</dbReference>
<dbReference type="Ensembl" id="ENST00000409572.5">
    <molecule id="P43354-1"/>
    <property type="protein sequence ID" value="ENSP00000386747.1"/>
    <property type="gene ID" value="ENSG00000153234.16"/>
</dbReference>
<dbReference type="Ensembl" id="ENST00000426264.5">
    <molecule id="P43354-2"/>
    <property type="protein sequence ID" value="ENSP00000389986.1"/>
    <property type="gene ID" value="ENSG00000153234.16"/>
</dbReference>
<dbReference type="GeneID" id="4929"/>
<dbReference type="KEGG" id="hsa:4929"/>
<dbReference type="MANE-Select" id="ENST00000339562.9">
    <property type="protein sequence ID" value="ENSP00000344479.4"/>
    <property type="RefSeq nucleotide sequence ID" value="NM_006186.4"/>
    <property type="RefSeq protein sequence ID" value="NP_006177.1"/>
</dbReference>
<dbReference type="UCSC" id="uc002tyx.5">
    <molecule id="P43354-1"/>
    <property type="organism name" value="human"/>
</dbReference>
<dbReference type="AGR" id="HGNC:7981"/>
<dbReference type="CTD" id="4929"/>
<dbReference type="DisGeNET" id="4929"/>
<dbReference type="GeneCards" id="NR4A2"/>
<dbReference type="HGNC" id="HGNC:7981">
    <property type="gene designation" value="NR4A2"/>
</dbReference>
<dbReference type="HPA" id="ENSG00000153234">
    <property type="expression patterns" value="Tissue enhanced (adrenal gland, bone marrow, ovary)"/>
</dbReference>
<dbReference type="MalaCards" id="NR4A2"/>
<dbReference type="MIM" id="601828">
    <property type="type" value="gene"/>
</dbReference>
<dbReference type="MIM" id="619911">
    <property type="type" value="phenotype"/>
</dbReference>
<dbReference type="neXtProt" id="NX_P43354"/>
<dbReference type="OpenTargets" id="ENSG00000153234"/>
<dbReference type="Orphanet" id="98808">
    <property type="disease" value="Autosomal dominant dopa-responsive dystonia"/>
</dbReference>
<dbReference type="Orphanet" id="1617">
    <property type="disease" value="Developmental delay-language impairment-dopa responsive dystonia-parkinsonism syndrome due to 2q24 microdeletion"/>
</dbReference>
<dbReference type="Orphanet" id="660012">
    <property type="disease" value="Developmental delay-language impairment-dopa responsive dystonia-parkinsonism syndrome due to a NR4A2 point mutation"/>
</dbReference>
<dbReference type="PharmGKB" id="PA31762"/>
<dbReference type="VEuPathDB" id="HostDB:ENSG00000153234"/>
<dbReference type="eggNOG" id="KOG4217">
    <property type="taxonomic scope" value="Eukaryota"/>
</dbReference>
<dbReference type="GeneTree" id="ENSGT00950000183038"/>
<dbReference type="HOGENOM" id="CLU_007368_14_2_1"/>
<dbReference type="InParanoid" id="P43354"/>
<dbReference type="OMA" id="EDIPMHN"/>
<dbReference type="OrthoDB" id="5952118at2759"/>
<dbReference type="PAN-GO" id="P43354">
    <property type="GO annotations" value="9 GO annotations based on evolutionary models"/>
</dbReference>
<dbReference type="PhylomeDB" id="P43354"/>
<dbReference type="TreeFam" id="TF315430"/>
<dbReference type="PathwayCommons" id="P43354"/>
<dbReference type="Reactome" id="R-HSA-383280">
    <property type="pathway name" value="Nuclear Receptor transcription pathway"/>
</dbReference>
<dbReference type="Reactome" id="R-HSA-4090294">
    <property type="pathway name" value="SUMOylation of intracellular receptors"/>
</dbReference>
<dbReference type="SignaLink" id="P43354"/>
<dbReference type="SIGNOR" id="P43354"/>
<dbReference type="BioGRID-ORCS" id="4929">
    <property type="hits" value="20 hits in 1187 CRISPR screens"/>
</dbReference>
<dbReference type="ChiTaRS" id="NR4A2">
    <property type="organism name" value="human"/>
</dbReference>
<dbReference type="EvolutionaryTrace" id="P43354"/>
<dbReference type="GeneWiki" id="Nuclear_receptor_related-1_protein"/>
<dbReference type="GenomeRNAi" id="4929"/>
<dbReference type="Pharos" id="P43354">
    <property type="development level" value="Tchem"/>
</dbReference>
<dbReference type="PRO" id="PR:P43354"/>
<dbReference type="Proteomes" id="UP000005640">
    <property type="component" value="Chromosome 2"/>
</dbReference>
<dbReference type="RNAct" id="P43354">
    <property type="molecule type" value="protein"/>
</dbReference>
<dbReference type="Bgee" id="ENSG00000153234">
    <property type="expression patterns" value="Expressed in mucosa of paranasal sinus and 195 other cell types or tissues"/>
</dbReference>
<dbReference type="ExpressionAtlas" id="P43354">
    <property type="expression patterns" value="baseline and differential"/>
</dbReference>
<dbReference type="GO" id="GO:0000785">
    <property type="term" value="C:chromatin"/>
    <property type="evidence" value="ECO:0000247"/>
    <property type="project" value="NTNU_SB"/>
</dbReference>
<dbReference type="GO" id="GO:0005737">
    <property type="term" value="C:cytoplasm"/>
    <property type="evidence" value="ECO:0007669"/>
    <property type="project" value="UniProtKB-SubCell"/>
</dbReference>
<dbReference type="GO" id="GO:0016607">
    <property type="term" value="C:nuclear speck"/>
    <property type="evidence" value="ECO:0000314"/>
    <property type="project" value="HPA"/>
</dbReference>
<dbReference type="GO" id="GO:0005654">
    <property type="term" value="C:nucleoplasm"/>
    <property type="evidence" value="ECO:0000304"/>
    <property type="project" value="Reactome"/>
</dbReference>
<dbReference type="GO" id="GO:0005634">
    <property type="term" value="C:nucleus"/>
    <property type="evidence" value="ECO:0000314"/>
    <property type="project" value="UniProtKB"/>
</dbReference>
<dbReference type="GO" id="GO:0032991">
    <property type="term" value="C:protein-containing complex"/>
    <property type="evidence" value="ECO:0000304"/>
    <property type="project" value="ParkinsonsUK-UCL"/>
</dbReference>
<dbReference type="GO" id="GO:0005667">
    <property type="term" value="C:transcription regulator complex"/>
    <property type="evidence" value="ECO:0000318"/>
    <property type="project" value="GO_Central"/>
</dbReference>
<dbReference type="GO" id="GO:0008013">
    <property type="term" value="F:beta-catenin binding"/>
    <property type="evidence" value="ECO:0000304"/>
    <property type="project" value="ParkinsonsUK-UCL"/>
</dbReference>
<dbReference type="GO" id="GO:0003677">
    <property type="term" value="F:DNA binding"/>
    <property type="evidence" value="ECO:0000304"/>
    <property type="project" value="ParkinsonsUK-UCL"/>
</dbReference>
<dbReference type="GO" id="GO:0001228">
    <property type="term" value="F:DNA-binding transcription activator activity, RNA polymerase II-specific"/>
    <property type="evidence" value="ECO:0000250"/>
    <property type="project" value="UniProtKB"/>
</dbReference>
<dbReference type="GO" id="GO:0000981">
    <property type="term" value="F:DNA-binding transcription factor activity, RNA polymerase II-specific"/>
    <property type="evidence" value="ECO:0000247"/>
    <property type="project" value="NTNU_SB"/>
</dbReference>
<dbReference type="GO" id="GO:0035259">
    <property type="term" value="F:nuclear glucocorticoid receptor binding"/>
    <property type="evidence" value="ECO:0000318"/>
    <property type="project" value="GO_Central"/>
</dbReference>
<dbReference type="GO" id="GO:0004879">
    <property type="term" value="F:nuclear receptor activity"/>
    <property type="evidence" value="ECO:0000304"/>
    <property type="project" value="ParkinsonsUK-UCL"/>
</dbReference>
<dbReference type="GO" id="GO:0046965">
    <property type="term" value="F:nuclear retinoid X receptor binding"/>
    <property type="evidence" value="ECO:0000304"/>
    <property type="project" value="ParkinsonsUK-UCL"/>
</dbReference>
<dbReference type="GO" id="GO:0046982">
    <property type="term" value="F:protein heterodimerization activity"/>
    <property type="evidence" value="ECO:0000250"/>
    <property type="project" value="UniProtKB"/>
</dbReference>
<dbReference type="GO" id="GO:0000978">
    <property type="term" value="F:RNA polymerase II cis-regulatory region sequence-specific DNA binding"/>
    <property type="evidence" value="ECO:0000318"/>
    <property type="project" value="GO_Central"/>
</dbReference>
<dbReference type="GO" id="GO:1990837">
    <property type="term" value="F:sequence-specific double-stranded DNA binding"/>
    <property type="evidence" value="ECO:0000314"/>
    <property type="project" value="ARUK-UCL"/>
</dbReference>
<dbReference type="GO" id="GO:0008270">
    <property type="term" value="F:zinc ion binding"/>
    <property type="evidence" value="ECO:0007669"/>
    <property type="project" value="UniProtKB-KW"/>
</dbReference>
<dbReference type="GO" id="GO:0008344">
    <property type="term" value="P:adult locomotory behavior"/>
    <property type="evidence" value="ECO:0007669"/>
    <property type="project" value="Ensembl"/>
</dbReference>
<dbReference type="GO" id="GO:0060070">
    <property type="term" value="P:canonical Wnt signaling pathway"/>
    <property type="evidence" value="ECO:0000304"/>
    <property type="project" value="ParkinsonsUK-UCL"/>
</dbReference>
<dbReference type="GO" id="GO:0071376">
    <property type="term" value="P:cellular response to corticotropin-releasing hormone stimulus"/>
    <property type="evidence" value="ECO:0000250"/>
    <property type="project" value="UniProtKB"/>
</dbReference>
<dbReference type="GO" id="GO:0034599">
    <property type="term" value="P:cellular response to oxidative stress"/>
    <property type="evidence" value="ECO:0007669"/>
    <property type="project" value="Ensembl"/>
</dbReference>
<dbReference type="GO" id="GO:0021953">
    <property type="term" value="P:central nervous system neuron differentiation"/>
    <property type="evidence" value="ECO:0000318"/>
    <property type="project" value="GO_Central"/>
</dbReference>
<dbReference type="GO" id="GO:0021952">
    <property type="term" value="P:central nervous system projection neuron axonogenesis"/>
    <property type="evidence" value="ECO:0007669"/>
    <property type="project" value="Ensembl"/>
</dbReference>
<dbReference type="GO" id="GO:0006351">
    <property type="term" value="P:DNA-templated transcription"/>
    <property type="evidence" value="ECO:0000314"/>
    <property type="project" value="UniProtKB"/>
</dbReference>
<dbReference type="GO" id="GO:0042416">
    <property type="term" value="P:dopamine biosynthetic process"/>
    <property type="evidence" value="ECO:0007669"/>
    <property type="project" value="Ensembl"/>
</dbReference>
<dbReference type="GO" id="GO:0071542">
    <property type="term" value="P:dopaminergic neuron differentiation"/>
    <property type="evidence" value="ECO:0000250"/>
    <property type="project" value="UniProtKB"/>
</dbReference>
<dbReference type="GO" id="GO:0045444">
    <property type="term" value="P:fat cell differentiation"/>
    <property type="evidence" value="ECO:0000250"/>
    <property type="project" value="UniProtKB"/>
</dbReference>
<dbReference type="GO" id="GO:0051866">
    <property type="term" value="P:general adaptation syndrome"/>
    <property type="evidence" value="ECO:0007669"/>
    <property type="project" value="Ensembl"/>
</dbReference>
<dbReference type="GO" id="GO:0021986">
    <property type="term" value="P:habenula development"/>
    <property type="evidence" value="ECO:0007669"/>
    <property type="project" value="Ensembl"/>
</dbReference>
<dbReference type="GO" id="GO:1904948">
    <property type="term" value="P:midbrain dopaminergic neuron differentiation"/>
    <property type="evidence" value="ECO:0000304"/>
    <property type="project" value="ParkinsonsUK-UCL"/>
</dbReference>
<dbReference type="GO" id="GO:2001234">
    <property type="term" value="P:negative regulation of apoptotic signaling pathway"/>
    <property type="evidence" value="ECO:0000315"/>
    <property type="project" value="ParkinsonsUK-UCL"/>
</dbReference>
<dbReference type="GO" id="GO:0043524">
    <property type="term" value="P:negative regulation of neuron apoptotic process"/>
    <property type="evidence" value="ECO:0007669"/>
    <property type="project" value="Ensembl"/>
</dbReference>
<dbReference type="GO" id="GO:0000122">
    <property type="term" value="P:negative regulation of transcription by RNA polymerase II"/>
    <property type="evidence" value="ECO:0000315"/>
    <property type="project" value="ParkinsonsUK-UCL"/>
</dbReference>
<dbReference type="GO" id="GO:0051402">
    <property type="term" value="P:neuron apoptotic process"/>
    <property type="evidence" value="ECO:0007669"/>
    <property type="project" value="Ensembl"/>
</dbReference>
<dbReference type="GO" id="GO:0042551">
    <property type="term" value="P:neuron maturation"/>
    <property type="evidence" value="ECO:0007669"/>
    <property type="project" value="Ensembl"/>
</dbReference>
<dbReference type="GO" id="GO:0001764">
    <property type="term" value="P:neuron migration"/>
    <property type="evidence" value="ECO:0000304"/>
    <property type="project" value="ParkinsonsUK-UCL"/>
</dbReference>
<dbReference type="GO" id="GO:0045944">
    <property type="term" value="P:positive regulation of transcription by RNA polymerase II"/>
    <property type="evidence" value="ECO:0000250"/>
    <property type="project" value="UniProtKB"/>
</dbReference>
<dbReference type="GO" id="GO:0009791">
    <property type="term" value="P:post-embryonic development"/>
    <property type="evidence" value="ECO:0007669"/>
    <property type="project" value="Ensembl"/>
</dbReference>
<dbReference type="GO" id="GO:0042053">
    <property type="term" value="P:regulation of dopamine metabolic process"/>
    <property type="evidence" value="ECO:0007669"/>
    <property type="project" value="Ensembl"/>
</dbReference>
<dbReference type="GO" id="GO:0043576">
    <property type="term" value="P:regulation of respiratory gaseous exchange"/>
    <property type="evidence" value="ECO:0007669"/>
    <property type="project" value="Ensembl"/>
</dbReference>
<dbReference type="GO" id="GO:0006357">
    <property type="term" value="P:regulation of transcription by RNA polymerase II"/>
    <property type="evidence" value="ECO:0000318"/>
    <property type="project" value="GO_Central"/>
</dbReference>
<dbReference type="GO" id="GO:0001975">
    <property type="term" value="P:response to amphetamine"/>
    <property type="evidence" value="ECO:0007669"/>
    <property type="project" value="Ensembl"/>
</dbReference>
<dbReference type="GO" id="GO:0001666">
    <property type="term" value="P:response to hypoxia"/>
    <property type="evidence" value="ECO:0007669"/>
    <property type="project" value="Ensembl"/>
</dbReference>
<dbReference type="GO" id="GO:0006366">
    <property type="term" value="P:transcription by RNA polymerase II"/>
    <property type="evidence" value="ECO:0007669"/>
    <property type="project" value="Ensembl"/>
</dbReference>
<dbReference type="CDD" id="cd06969">
    <property type="entry name" value="NR_DBD_NGFI-B"/>
    <property type="match status" value="1"/>
</dbReference>
<dbReference type="CDD" id="cd07071">
    <property type="entry name" value="NR_LBD_Nurr1"/>
    <property type="match status" value="1"/>
</dbReference>
<dbReference type="FunFam" id="1.10.565.10:FF:000008">
    <property type="entry name" value="Nuclear receptor subfamily 4 group A member 1"/>
    <property type="match status" value="1"/>
</dbReference>
<dbReference type="FunFam" id="3.30.50.10:FF:000009">
    <property type="entry name" value="nuclear receptor subfamily 4 group A member 2"/>
    <property type="match status" value="1"/>
</dbReference>
<dbReference type="Gene3D" id="3.30.50.10">
    <property type="entry name" value="Erythroid Transcription Factor GATA-1, subunit A"/>
    <property type="match status" value="1"/>
</dbReference>
<dbReference type="Gene3D" id="1.10.565.10">
    <property type="entry name" value="Retinoid X Receptor"/>
    <property type="match status" value="1"/>
</dbReference>
<dbReference type="InterPro" id="IPR035500">
    <property type="entry name" value="NHR-like_dom_sf"/>
</dbReference>
<dbReference type="InterPro" id="IPR003070">
    <property type="entry name" value="NR4A1-3"/>
</dbReference>
<dbReference type="InterPro" id="IPR003073">
    <property type="entry name" value="NR4A2"/>
</dbReference>
<dbReference type="InterPro" id="IPR000536">
    <property type="entry name" value="Nucl_hrmn_rcpt_lig-bd"/>
</dbReference>
<dbReference type="InterPro" id="IPR001723">
    <property type="entry name" value="Nuclear_hrmn_rcpt"/>
</dbReference>
<dbReference type="InterPro" id="IPR001628">
    <property type="entry name" value="Znf_hrmn_rcpt"/>
</dbReference>
<dbReference type="InterPro" id="IPR013088">
    <property type="entry name" value="Znf_NHR/GATA"/>
</dbReference>
<dbReference type="PANTHER" id="PTHR24085">
    <property type="entry name" value="NUCLEAR HORMONE RECEPTOR"/>
    <property type="match status" value="1"/>
</dbReference>
<dbReference type="PANTHER" id="PTHR24085:SF0">
    <property type="entry name" value="NUCLEAR RECEPTOR SUBFAMILY 4 GROUP A MEMBER 2"/>
    <property type="match status" value="1"/>
</dbReference>
<dbReference type="Pfam" id="PF00104">
    <property type="entry name" value="Hormone_recep"/>
    <property type="match status" value="1"/>
</dbReference>
<dbReference type="Pfam" id="PF00105">
    <property type="entry name" value="zf-C4"/>
    <property type="match status" value="1"/>
</dbReference>
<dbReference type="PRINTS" id="PR01284">
    <property type="entry name" value="NUCLEARECPTR"/>
</dbReference>
<dbReference type="PRINTS" id="PR01287">
    <property type="entry name" value="NURRNUCRCPTR"/>
</dbReference>
<dbReference type="PRINTS" id="PR00398">
    <property type="entry name" value="STRDHORMONER"/>
</dbReference>
<dbReference type="PRINTS" id="PR00047">
    <property type="entry name" value="STROIDFINGER"/>
</dbReference>
<dbReference type="SMART" id="SM00430">
    <property type="entry name" value="HOLI"/>
    <property type="match status" value="1"/>
</dbReference>
<dbReference type="SMART" id="SM00399">
    <property type="entry name" value="ZnF_C4"/>
    <property type="match status" value="1"/>
</dbReference>
<dbReference type="SUPFAM" id="SSF57716">
    <property type="entry name" value="Glucocorticoid receptor-like (DNA-binding domain)"/>
    <property type="match status" value="1"/>
</dbReference>
<dbReference type="SUPFAM" id="SSF48508">
    <property type="entry name" value="Nuclear receptor ligand-binding domain"/>
    <property type="match status" value="1"/>
</dbReference>
<dbReference type="PROSITE" id="PS51843">
    <property type="entry name" value="NR_LBD"/>
    <property type="match status" value="1"/>
</dbReference>
<dbReference type="PROSITE" id="PS00031">
    <property type="entry name" value="NUCLEAR_REC_DBD_1"/>
    <property type="match status" value="1"/>
</dbReference>
<dbReference type="PROSITE" id="PS51030">
    <property type="entry name" value="NUCLEAR_REC_DBD_2"/>
    <property type="match status" value="1"/>
</dbReference>
<gene>
    <name type="primary">NR4A2</name>
    <name type="synonym">NOT</name>
    <name type="synonym">NURR1</name>
    <name type="synonym">TINUR</name>
</gene>
<accession>P43354</accession>
<accession>Q16311</accession>
<accession>Q53RZ2</accession>
<accession>Q6NXU0</accession>
<feature type="chain" id="PRO_0000053718" description="Nuclear receptor subfamily 4 group A member 2">
    <location>
        <begin position="1"/>
        <end position="598"/>
    </location>
</feature>
<feature type="domain" description="NR LBD" evidence="4">
    <location>
        <begin position="360"/>
        <end position="595"/>
    </location>
</feature>
<feature type="DNA-binding region" description="Nuclear receptor" evidence="3">
    <location>
        <begin position="260"/>
        <end position="335"/>
    </location>
</feature>
<feature type="zinc finger region" description="NR C4-type" evidence="3">
    <location>
        <begin position="263"/>
        <end position="283"/>
    </location>
</feature>
<feature type="zinc finger region" description="NR C4-type" evidence="3">
    <location>
        <begin position="299"/>
        <end position="323"/>
    </location>
</feature>
<feature type="region of interest" description="Disordered" evidence="5">
    <location>
        <begin position="1"/>
        <end position="22"/>
    </location>
</feature>
<feature type="region of interest" description="Disordered" evidence="5">
    <location>
        <begin position="337"/>
        <end position="361"/>
    </location>
</feature>
<feature type="short sequence motif" description="Bipartite nuclear localization signal (NLS1)">
    <location>
        <begin position="287"/>
        <end position="314"/>
    </location>
</feature>
<feature type="short sequence motif" description="Nuclear localization signal (NLS1)" evidence="9">
    <location>
        <begin position="338"/>
        <end position="350"/>
    </location>
</feature>
<feature type="short sequence motif" description="nuclear export sequence (NES1)">
    <location>
        <begin position="443"/>
        <end position="452"/>
    </location>
</feature>
<feature type="short sequence motif" description="nuclear export sequence (NES2)">
    <location>
        <begin position="568"/>
        <end position="577"/>
    </location>
</feature>
<feature type="compositionally biased region" description="Low complexity" evidence="5">
    <location>
        <begin position="8"/>
        <end position="22"/>
    </location>
</feature>
<feature type="compositionally biased region" description="Pro residues" evidence="5">
    <location>
        <begin position="352"/>
        <end position="361"/>
    </location>
</feature>
<feature type="splice variant" id="VSP_056057" description="In isoform 2." evidence="14 15">
    <location>
        <begin position="1"/>
        <end position="63"/>
    </location>
</feature>
<feature type="sequence variant" id="VAR_087381" description="In IDLDP." evidence="12">
    <original>C</original>
    <variation>Y</variation>
    <location>
        <position position="280"/>
    </location>
</feature>
<feature type="sequence variant" id="VAR_087382" description="In IDLDP; uncertain significance." evidence="12">
    <original>F</original>
    <variation>S</variation>
    <location>
        <position position="286"/>
    </location>
</feature>
<feature type="sequence variant" id="VAR_087383" description="In IDLDP." evidence="12">
    <original>C</original>
    <variation>Y</variation>
    <location>
        <position position="305"/>
    </location>
</feature>
<feature type="sequence variant" id="VAR_087384" description="In IDLDP." evidence="13">
    <original>R</original>
    <variation>Q</variation>
    <location>
        <position position="319"/>
    </location>
</feature>
<feature type="sequence variant" id="VAR_087385" description="In IDLDP; uncertain significance." evidence="12">
    <original>C</original>
    <variation>F</variation>
    <location>
        <position position="323"/>
    </location>
</feature>
<feature type="sequence variant" id="VAR_087386" description="In IDLDP; uncertain significance." evidence="12">
    <original>D</original>
    <variation>G</variation>
    <location>
        <position position="392"/>
    </location>
</feature>
<feature type="sequence variant" id="VAR_087387" description="In IDLDP." evidence="12">
    <location>
        <begin position="526"/>
        <end position="598"/>
    </location>
</feature>
<feature type="sequence conflict" description="In Ref. 8; AAB33999." evidence="16" ref="8">
    <original>C</original>
    <variation>W</variation>
    <location>
        <position position="465"/>
    </location>
</feature>
<feature type="sequence conflict" description="In Ref. 8; AAB33999." evidence="16" ref="8">
    <original>V</original>
    <variation>W</variation>
    <location>
        <position position="468"/>
    </location>
</feature>
<feature type="turn" evidence="19">
    <location>
        <begin position="264"/>
        <end position="266"/>
    </location>
</feature>
<feature type="strand" evidence="19">
    <location>
        <begin position="271"/>
        <end position="274"/>
    </location>
</feature>
<feature type="helix" evidence="19">
    <location>
        <begin position="281"/>
        <end position="292"/>
    </location>
</feature>
<feature type="strand" evidence="19">
    <location>
        <begin position="300"/>
        <end position="303"/>
    </location>
</feature>
<feature type="turn" evidence="19">
    <location>
        <begin position="310"/>
        <end position="313"/>
    </location>
</feature>
<feature type="helix" evidence="19">
    <location>
        <begin position="316"/>
        <end position="326"/>
    </location>
</feature>
<feature type="helix" evidence="19">
    <location>
        <begin position="330"/>
        <end position="332"/>
    </location>
</feature>
<feature type="helix" evidence="17">
    <location>
        <begin position="338"/>
        <end position="341"/>
    </location>
</feature>
<feature type="helix" evidence="18">
    <location>
        <begin position="364"/>
        <end position="373"/>
    </location>
</feature>
<feature type="helix" evidence="18">
    <location>
        <begin position="379"/>
        <end position="381"/>
    </location>
</feature>
<feature type="helix" evidence="17">
    <location>
        <begin position="392"/>
        <end position="394"/>
    </location>
</feature>
<feature type="helix" evidence="18">
    <location>
        <begin position="400"/>
        <end position="422"/>
    </location>
</feature>
<feature type="turn" evidence="18">
    <location>
        <begin position="425"/>
        <end position="429"/>
    </location>
</feature>
<feature type="helix" evidence="18">
    <location>
        <begin position="432"/>
        <end position="454"/>
    </location>
</feature>
<feature type="helix" evidence="18">
    <location>
        <begin position="457"/>
        <end position="459"/>
    </location>
</feature>
<feature type="strand" evidence="18">
    <location>
        <begin position="461"/>
        <end position="463"/>
    </location>
</feature>
<feature type="strand" evidence="18">
    <location>
        <begin position="467"/>
        <end position="471"/>
    </location>
</feature>
<feature type="helix" evidence="18">
    <location>
        <begin position="472"/>
        <end position="479"/>
    </location>
</feature>
<feature type="helix" evidence="18">
    <location>
        <begin position="482"/>
        <end position="494"/>
    </location>
</feature>
<feature type="helix" evidence="18">
    <location>
        <begin position="500"/>
        <end position="511"/>
    </location>
</feature>
<feature type="helix" evidence="18">
    <location>
        <begin position="521"/>
        <end position="542"/>
    </location>
</feature>
<feature type="turn" evidence="18">
    <location>
        <begin position="543"/>
        <end position="545"/>
    </location>
</feature>
<feature type="helix" evidence="18">
    <location>
        <begin position="549"/>
        <end position="556"/>
    </location>
</feature>
<feature type="helix" evidence="18">
    <location>
        <begin position="558"/>
        <end position="579"/>
    </location>
</feature>
<feature type="helix" evidence="18">
    <location>
        <begin position="586"/>
        <end position="595"/>
    </location>
</feature>
<reference key="1">
    <citation type="journal article" date="1994" name="Mol. Endocrinol.">
        <title>NOT, a human immediate-early response gene closely related to the steroid/thyroid hormone receptor NAK1/TR3.</title>
        <authorList>
            <person name="Mages H.W."/>
            <person name="Rilke O."/>
            <person name="Bravo R."/>
            <person name="Senger G."/>
            <person name="Kroczek R.A."/>
        </authorList>
    </citation>
    <scope>NUCLEOTIDE SEQUENCE [MRNA] (ISOFORM 1)</scope>
    <source>
        <tissue>Blood</tissue>
    </source>
</reference>
<reference key="2">
    <citation type="journal article" date="1999" name="Gene">
        <title>Molecular cloning of the human Nurr1 gene: characterization of the human gene and cDNAs.</title>
        <authorList>
            <person name="Ichinose H."/>
            <person name="Ohye T."/>
            <person name="Suzuki T."/>
            <person name="Sumi-Ichinose C."/>
            <person name="Nomura T."/>
            <person name="Hagino Y."/>
            <person name="Nagatsu T."/>
        </authorList>
    </citation>
    <scope>NUCLEOTIDE SEQUENCE [GENOMIC DNA]</scope>
    <source>
        <tissue>Fibroblast</tissue>
    </source>
</reference>
<reference key="3">
    <citation type="journal article" date="1999" name="Gene">
        <title>Organization of the human orphan nuclear receptor Nurr1 gene.</title>
        <authorList>
            <person name="Torii T."/>
            <person name="Kawarai T."/>
            <person name="Nakamura S."/>
            <person name="Kawakami H."/>
        </authorList>
    </citation>
    <scope>NUCLEOTIDE SEQUENCE [GENOMIC DNA]</scope>
</reference>
<reference key="4">
    <citation type="journal article" date="2004" name="Nat. Genet.">
        <title>Complete sequencing and characterization of 21,243 full-length human cDNAs.</title>
        <authorList>
            <person name="Ota T."/>
            <person name="Suzuki Y."/>
            <person name="Nishikawa T."/>
            <person name="Otsuki T."/>
            <person name="Sugiyama T."/>
            <person name="Irie R."/>
            <person name="Wakamatsu A."/>
            <person name="Hayashi K."/>
            <person name="Sato H."/>
            <person name="Nagai K."/>
            <person name="Kimura K."/>
            <person name="Makita H."/>
            <person name="Sekine M."/>
            <person name="Obayashi M."/>
            <person name="Nishi T."/>
            <person name="Shibahara T."/>
            <person name="Tanaka T."/>
            <person name="Ishii S."/>
            <person name="Yamamoto J."/>
            <person name="Saito K."/>
            <person name="Kawai Y."/>
            <person name="Isono Y."/>
            <person name="Nakamura Y."/>
            <person name="Nagahari K."/>
            <person name="Murakami K."/>
            <person name="Yasuda T."/>
            <person name="Iwayanagi T."/>
            <person name="Wagatsuma M."/>
            <person name="Shiratori A."/>
            <person name="Sudo H."/>
            <person name="Hosoiri T."/>
            <person name="Kaku Y."/>
            <person name="Kodaira H."/>
            <person name="Kondo H."/>
            <person name="Sugawara M."/>
            <person name="Takahashi M."/>
            <person name="Kanda K."/>
            <person name="Yokoi T."/>
            <person name="Furuya T."/>
            <person name="Kikkawa E."/>
            <person name="Omura Y."/>
            <person name="Abe K."/>
            <person name="Kamihara K."/>
            <person name="Katsuta N."/>
            <person name="Sato K."/>
            <person name="Tanikawa M."/>
            <person name="Yamazaki M."/>
            <person name="Ninomiya K."/>
            <person name="Ishibashi T."/>
            <person name="Yamashita H."/>
            <person name="Murakawa K."/>
            <person name="Fujimori K."/>
            <person name="Tanai H."/>
            <person name="Kimata M."/>
            <person name="Watanabe M."/>
            <person name="Hiraoka S."/>
            <person name="Chiba Y."/>
            <person name="Ishida S."/>
            <person name="Ono Y."/>
            <person name="Takiguchi S."/>
            <person name="Watanabe S."/>
            <person name="Yosida M."/>
            <person name="Hotuta T."/>
            <person name="Kusano J."/>
            <person name="Kanehori K."/>
            <person name="Takahashi-Fujii A."/>
            <person name="Hara H."/>
            <person name="Tanase T.-O."/>
            <person name="Nomura Y."/>
            <person name="Togiya S."/>
            <person name="Komai F."/>
            <person name="Hara R."/>
            <person name="Takeuchi K."/>
            <person name="Arita M."/>
            <person name="Imose N."/>
            <person name="Musashino K."/>
            <person name="Yuuki H."/>
            <person name="Oshima A."/>
            <person name="Sasaki N."/>
            <person name="Aotsuka S."/>
            <person name="Yoshikawa Y."/>
            <person name="Matsunawa H."/>
            <person name="Ichihara T."/>
            <person name="Shiohata N."/>
            <person name="Sano S."/>
            <person name="Moriya S."/>
            <person name="Momiyama H."/>
            <person name="Satoh N."/>
            <person name="Takami S."/>
            <person name="Terashima Y."/>
            <person name="Suzuki O."/>
            <person name="Nakagawa S."/>
            <person name="Senoh A."/>
            <person name="Mizoguchi H."/>
            <person name="Goto Y."/>
            <person name="Shimizu F."/>
            <person name="Wakebe H."/>
            <person name="Hishigaki H."/>
            <person name="Watanabe T."/>
            <person name="Sugiyama A."/>
            <person name="Takemoto M."/>
            <person name="Kawakami B."/>
            <person name="Yamazaki M."/>
            <person name="Watanabe K."/>
            <person name="Kumagai A."/>
            <person name="Itakura S."/>
            <person name="Fukuzumi Y."/>
            <person name="Fujimori Y."/>
            <person name="Komiyama M."/>
            <person name="Tashiro H."/>
            <person name="Tanigami A."/>
            <person name="Fujiwara T."/>
            <person name="Ono T."/>
            <person name="Yamada K."/>
            <person name="Fujii Y."/>
            <person name="Ozaki K."/>
            <person name="Hirao M."/>
            <person name="Ohmori Y."/>
            <person name="Kawabata A."/>
            <person name="Hikiji T."/>
            <person name="Kobatake N."/>
            <person name="Inagaki H."/>
            <person name="Ikema Y."/>
            <person name="Okamoto S."/>
            <person name="Okitani R."/>
            <person name="Kawakami T."/>
            <person name="Noguchi S."/>
            <person name="Itoh T."/>
            <person name="Shigeta K."/>
            <person name="Senba T."/>
            <person name="Matsumura K."/>
            <person name="Nakajima Y."/>
            <person name="Mizuno T."/>
            <person name="Morinaga M."/>
            <person name="Sasaki M."/>
            <person name="Togashi T."/>
            <person name="Oyama M."/>
            <person name="Hata H."/>
            <person name="Watanabe M."/>
            <person name="Komatsu T."/>
            <person name="Mizushima-Sugano J."/>
            <person name="Satoh T."/>
            <person name="Shirai Y."/>
            <person name="Takahashi Y."/>
            <person name="Nakagawa K."/>
            <person name="Okumura K."/>
            <person name="Nagase T."/>
            <person name="Nomura N."/>
            <person name="Kikuchi H."/>
            <person name="Masuho Y."/>
            <person name="Yamashita R."/>
            <person name="Nakai K."/>
            <person name="Yada T."/>
            <person name="Nakamura Y."/>
            <person name="Ohara O."/>
            <person name="Isogai T."/>
            <person name="Sugano S."/>
        </authorList>
    </citation>
    <scope>NUCLEOTIDE SEQUENCE [LARGE SCALE MRNA] (ISOFORM 2)</scope>
    <source>
        <tissue>Brain</tissue>
    </source>
</reference>
<reference key="5">
    <citation type="journal article" date="2005" name="Nature">
        <title>Generation and annotation of the DNA sequences of human chromosomes 2 and 4.</title>
        <authorList>
            <person name="Hillier L.W."/>
            <person name="Graves T.A."/>
            <person name="Fulton R.S."/>
            <person name="Fulton L.A."/>
            <person name="Pepin K.H."/>
            <person name="Minx P."/>
            <person name="Wagner-McPherson C."/>
            <person name="Layman D."/>
            <person name="Wylie K."/>
            <person name="Sekhon M."/>
            <person name="Becker M.C."/>
            <person name="Fewell G.A."/>
            <person name="Delehaunty K.D."/>
            <person name="Miner T.L."/>
            <person name="Nash W.E."/>
            <person name="Kremitzki C."/>
            <person name="Oddy L."/>
            <person name="Du H."/>
            <person name="Sun H."/>
            <person name="Bradshaw-Cordum H."/>
            <person name="Ali J."/>
            <person name="Carter J."/>
            <person name="Cordes M."/>
            <person name="Harris A."/>
            <person name="Isak A."/>
            <person name="van Brunt A."/>
            <person name="Nguyen C."/>
            <person name="Du F."/>
            <person name="Courtney L."/>
            <person name="Kalicki J."/>
            <person name="Ozersky P."/>
            <person name="Abbott S."/>
            <person name="Armstrong J."/>
            <person name="Belter E.A."/>
            <person name="Caruso L."/>
            <person name="Cedroni M."/>
            <person name="Cotton M."/>
            <person name="Davidson T."/>
            <person name="Desai A."/>
            <person name="Elliott G."/>
            <person name="Erb T."/>
            <person name="Fronick C."/>
            <person name="Gaige T."/>
            <person name="Haakenson W."/>
            <person name="Haglund K."/>
            <person name="Holmes A."/>
            <person name="Harkins R."/>
            <person name="Kim K."/>
            <person name="Kruchowski S.S."/>
            <person name="Strong C.M."/>
            <person name="Grewal N."/>
            <person name="Goyea E."/>
            <person name="Hou S."/>
            <person name="Levy A."/>
            <person name="Martinka S."/>
            <person name="Mead K."/>
            <person name="McLellan M.D."/>
            <person name="Meyer R."/>
            <person name="Randall-Maher J."/>
            <person name="Tomlinson C."/>
            <person name="Dauphin-Kohlberg S."/>
            <person name="Kozlowicz-Reilly A."/>
            <person name="Shah N."/>
            <person name="Swearengen-Shahid S."/>
            <person name="Snider J."/>
            <person name="Strong J.T."/>
            <person name="Thompson J."/>
            <person name="Yoakum M."/>
            <person name="Leonard S."/>
            <person name="Pearman C."/>
            <person name="Trani L."/>
            <person name="Radionenko M."/>
            <person name="Waligorski J.E."/>
            <person name="Wang C."/>
            <person name="Rock S.M."/>
            <person name="Tin-Wollam A.-M."/>
            <person name="Maupin R."/>
            <person name="Latreille P."/>
            <person name="Wendl M.C."/>
            <person name="Yang S.-P."/>
            <person name="Pohl C."/>
            <person name="Wallis J.W."/>
            <person name="Spieth J."/>
            <person name="Bieri T.A."/>
            <person name="Berkowicz N."/>
            <person name="Nelson J.O."/>
            <person name="Osborne J."/>
            <person name="Ding L."/>
            <person name="Meyer R."/>
            <person name="Sabo A."/>
            <person name="Shotland Y."/>
            <person name="Sinha P."/>
            <person name="Wohldmann P.E."/>
            <person name="Cook L.L."/>
            <person name="Hickenbotham M.T."/>
            <person name="Eldred J."/>
            <person name="Williams D."/>
            <person name="Jones T.A."/>
            <person name="She X."/>
            <person name="Ciccarelli F.D."/>
            <person name="Izaurralde E."/>
            <person name="Taylor J."/>
            <person name="Schmutz J."/>
            <person name="Myers R.M."/>
            <person name="Cox D.R."/>
            <person name="Huang X."/>
            <person name="McPherson J.D."/>
            <person name="Mardis E.R."/>
            <person name="Clifton S.W."/>
            <person name="Warren W.C."/>
            <person name="Chinwalla A.T."/>
            <person name="Eddy S.R."/>
            <person name="Marra M.A."/>
            <person name="Ovcharenko I."/>
            <person name="Furey T.S."/>
            <person name="Miller W."/>
            <person name="Eichler E.E."/>
            <person name="Bork P."/>
            <person name="Suyama M."/>
            <person name="Torrents D."/>
            <person name="Waterston R.H."/>
            <person name="Wilson R.K."/>
        </authorList>
    </citation>
    <scope>NUCLEOTIDE SEQUENCE [LARGE SCALE GENOMIC DNA]</scope>
</reference>
<reference key="6">
    <citation type="submission" date="2005-09" db="EMBL/GenBank/DDBJ databases">
        <authorList>
            <person name="Mural R.J."/>
            <person name="Istrail S."/>
            <person name="Sutton G.G."/>
            <person name="Florea L."/>
            <person name="Halpern A.L."/>
            <person name="Mobarry C.M."/>
            <person name="Lippert R."/>
            <person name="Walenz B."/>
            <person name="Shatkay H."/>
            <person name="Dew I."/>
            <person name="Miller J.R."/>
            <person name="Flanigan M.J."/>
            <person name="Edwards N.J."/>
            <person name="Bolanos R."/>
            <person name="Fasulo D."/>
            <person name="Halldorsson B.V."/>
            <person name="Hannenhalli S."/>
            <person name="Turner R."/>
            <person name="Yooseph S."/>
            <person name="Lu F."/>
            <person name="Nusskern D.R."/>
            <person name="Shue B.C."/>
            <person name="Zheng X.H."/>
            <person name="Zhong F."/>
            <person name="Delcher A.L."/>
            <person name="Huson D.H."/>
            <person name="Kravitz S.A."/>
            <person name="Mouchard L."/>
            <person name="Reinert K."/>
            <person name="Remington K.A."/>
            <person name="Clark A.G."/>
            <person name="Waterman M.S."/>
            <person name="Eichler E.E."/>
            <person name="Adams M.D."/>
            <person name="Hunkapiller M.W."/>
            <person name="Myers E.W."/>
            <person name="Venter J.C."/>
        </authorList>
    </citation>
    <scope>NUCLEOTIDE SEQUENCE [LARGE SCALE GENOMIC DNA]</scope>
</reference>
<reference key="7">
    <citation type="journal article" date="2004" name="Genome Res.">
        <title>The status, quality, and expansion of the NIH full-length cDNA project: the Mammalian Gene Collection (MGC).</title>
        <authorList>
            <consortium name="The MGC Project Team"/>
        </authorList>
    </citation>
    <scope>NUCLEOTIDE SEQUENCE [LARGE SCALE MRNA] (ISOFORMS 1 AND 2)</scope>
    <source>
        <tissue>Skin</tissue>
        <tissue>Testis</tissue>
    </source>
</reference>
<reference key="8">
    <citation type="journal article" date="1995" name="J. Immunol.">
        <title>cDNA cloning of a NGFI-B/nur77-related transcription factor from an apoptotic human T cell line.</title>
        <authorList>
            <person name="Okabe T."/>
            <person name="Takayanagi R."/>
            <person name="Imasaki K."/>
            <person name="Haji M."/>
            <person name="Nawata H."/>
            <person name="Watanabe T."/>
        </authorList>
    </citation>
    <scope>NUCLEOTIDE SEQUENCE [MRNA] OF 59-598 (ISOFORM 1)</scope>
</reference>
<reference key="9">
    <citation type="journal article" date="2005" name="J. Biol. Chem.">
        <title>Structural basis for the cell-specific activities of the NGFI-B and the Nurr1 ligand-binding domain.</title>
        <authorList>
            <person name="Flaig R."/>
            <person name="Greschik H."/>
            <person name="Peluso-Iltis C."/>
            <person name="Moras D."/>
        </authorList>
    </citation>
    <scope>FUNCTION</scope>
</reference>
<reference key="10">
    <citation type="journal article" date="2007" name="Int. J. Dev. Neurosci.">
        <title>Induction of tyrosine hydroxylase expression by the transcription factor Pitx3.</title>
        <authorList>
            <person name="Messmer K."/>
            <person name="Remington M.P."/>
            <person name="Skidmore F."/>
            <person name="Fishman P.S."/>
        </authorList>
    </citation>
    <scope>FUNCTION</scope>
    <scope>SUBCELLULAR LOCATION</scope>
</reference>
<reference key="11">
    <citation type="journal article" date="2008" name="Proc. Natl. Acad. Sci. U.S.A.">
        <title>A quantitative atlas of mitotic phosphorylation.</title>
        <authorList>
            <person name="Dephoure N."/>
            <person name="Zhou C."/>
            <person name="Villen J."/>
            <person name="Beausoleil S.A."/>
            <person name="Bakalarski C.E."/>
            <person name="Elledge S.J."/>
            <person name="Gygi S.P."/>
        </authorList>
    </citation>
    <scope>IDENTIFICATION BY MASS SPECTROMETRY [LARGE SCALE ANALYSIS]</scope>
    <source>
        <tissue>Cervix carcinoma</tissue>
    </source>
</reference>
<reference key="12">
    <citation type="journal article" date="2013" name="J. Biol. Chem.">
        <title>Nuclear import and export signals control the subcellular localization of Nurr1 protein in response to oxidative stress.</title>
        <authorList>
            <person name="Garcia-Yague A.J."/>
            <person name="Rada P."/>
            <person name="Rojo A.I."/>
            <person name="Lastres-Becker I."/>
            <person name="Cuadrado A."/>
        </authorList>
    </citation>
    <scope>SUBCELLULAR LOCATION</scope>
    <scope>NUCLEAR LOCALIZATION SIGNALS</scope>
    <scope>NUCLEAR EXPORT SEQUENCES</scope>
</reference>
<reference key="13">
    <citation type="journal article" date="2003" name="Nature">
        <title>Structure and function of Nurr1 identifies a class of ligand-independent nuclear receptors.</title>
        <authorList>
            <person name="Wang Z."/>
            <person name="Benoit G."/>
            <person name="Liu J."/>
            <person name="Prasad S."/>
            <person name="Aarnisalo P."/>
            <person name="Liu X."/>
            <person name="Xu H."/>
            <person name="Walker N.P."/>
            <person name="Perlmann T."/>
        </authorList>
    </citation>
    <scope>X-RAY CRYSTALLOGRAPHY (2.2 ANGSTROMS) OF 328-598</scope>
</reference>
<reference key="14">
    <citation type="journal article" date="2019" name="Clin. Case Rep.">
        <title>Heterozygous loss of function of NR4A2 is associated with intellectual deficiency, rolandic epilepsy, and language impairment.</title>
        <authorList>
            <person name="Ramos L.L.P."/>
            <person name="Monteiro F.P."/>
            <person name="Sampaio L.P.B."/>
            <person name="Costa L.A."/>
            <person name="Ribeiro M.D.O."/>
            <person name="Freitas E.L."/>
            <person name="Kitajima J.P."/>
            <person name="Kok F."/>
        </authorList>
    </citation>
    <scope>INVOLVEMENT IN IDLDP</scope>
</reference>
<reference key="15">
    <citation type="journal article" date="2020" name="Genet. Med.">
        <title>De novo variants of NR4A2 are associated with neurodevelopmental disorder and epilepsy.</title>
        <authorList>
            <person name="Singh S."/>
            <person name="Gupta A."/>
            <person name="Zech M."/>
            <person name="Sigafoos A.N."/>
            <person name="Clark K.J."/>
            <person name="Dincer Y."/>
            <person name="Wagner M."/>
            <person name="Humberson J.B."/>
            <person name="Green S."/>
            <person name="van Gassen K."/>
            <person name="Brandt T."/>
            <person name="Schnur R.E."/>
            <person name="Millan F."/>
            <person name="Si Y."/>
            <person name="Mall V."/>
            <person name="Winkelmann J."/>
            <person name="Gavrilova R.H."/>
            <person name="Klee E.W."/>
            <person name="Engleman K."/>
            <person name="Safina N.P."/>
            <person name="Slaugh R."/>
            <person name="Bryant E.M."/>
            <person name="Tan W.H."/>
            <person name="Granadillo J."/>
            <person name="Misra S.N."/>
            <person name="Schaefer G.B."/>
            <person name="Towner S."/>
            <person name="Brilstra E.H."/>
            <person name="Koeleman B.P.C."/>
        </authorList>
    </citation>
    <scope>INVOLVEMENT IN IDLDP</scope>
    <scope>VARIANTS IDLDP TYR-280; SER-286; TYR-305; PHE-323; GLY-392 AND 526-GLU--PHE-598 DEL</scope>
</reference>
<reference key="16">
    <citation type="journal article" date="2020" name="Mov. Disord.">
        <title>Loss-of-Function Mutations in NR4A2 Cause Dopa-Responsive Dystonia Parkinsonism.</title>
        <authorList>
            <person name="Wirth T."/>
            <person name="Mariani L.L."/>
            <person name="Bergant G."/>
            <person name="Baulac M."/>
            <person name="Habert M.O."/>
            <person name="Drouot N."/>
            <person name="Ollivier E."/>
            <person name="Hodzic A."/>
            <person name="Rudolf G."/>
            <person name="Nitschke P."/>
            <person name="Rudolf G."/>
            <person name="Chelly J."/>
            <person name="Tranchant C."/>
            <person name="Anheim M."/>
            <person name="Roze E."/>
        </authorList>
    </citation>
    <scope>INVOLVEMENT IN IDLDP</scope>
</reference>
<reference key="17">
    <citation type="journal article" date="2021" name="Neurol. Genet.">
        <title>NR4A2 Mutations Can Cause Intellectual Disability and Language Impairment With Persistent Dystonia-Parkinsonism.</title>
        <authorList>
            <person name="Jesus S."/>
            <person name="Hinarejos I."/>
            <person name="Carrillo F."/>
            <person name="Martinez-Rubio D."/>
            <person name="Macias-Garcia D."/>
            <person name="Sanchez-Monteagudo A."/>
            <person name="Adarmes A."/>
            <person name="Lupo V."/>
            <person name="Perez-Duenas B."/>
            <person name="Mir P."/>
            <person name="Espinos C."/>
        </authorList>
    </citation>
    <scope>INVOLVEMENT IN IDLDP</scope>
    <scope>VARIANT IDLDP GLN-319</scope>
</reference>
<name>NR4A2_HUMAN</name>
<comment type="function">
    <text evidence="2 7 8">Transcriptional regulator which is important for the differentiation and maintenance of meso-diencephalic dopaminergic (mdDA) neurons during development (PubMed:15716272, PubMed:17184956). It is crucial for expression of a set of genes such as SLC6A3, SLC18A2, TH and DRD2 which are essential for development of mdDA neurons (By similarity).</text>
</comment>
<comment type="subunit">
    <text evidence="1">Interacts with SFPQ, NCOR2, SIN3A and HADC1. The interaction with NCOR2 increases in the absence of PITX3. Interacts with PER2 (By similarity).</text>
</comment>
<comment type="interaction">
    <interactant intactId="EBI-2681738">
        <id>P43354</id>
    </interactant>
    <interactant intactId="EBI-77613">
        <id>P05067</id>
        <label>APP</label>
    </interactant>
    <organismsDiffer>false</organismsDiffer>
    <experiments>3</experiments>
</comment>
<comment type="interaction">
    <interactant intactId="EBI-2681738">
        <id>P43354</id>
    </interactant>
    <interactant intactId="EBI-745859">
        <id>P55273</id>
        <label>CDKN2D</label>
    </interactant>
    <organismsDiffer>false</organismsDiffer>
    <experiments>4</experiments>
</comment>
<comment type="interaction">
    <interactant intactId="EBI-2681738">
        <id>P43354</id>
    </interactant>
    <interactant intactId="EBI-12200605">
        <id>Q5T2S8</id>
        <label>ODAD2</label>
    </interactant>
    <organismsDiffer>false</organismsDiffer>
    <experiments>3</experiments>
</comment>
<comment type="interaction">
    <interactant intactId="EBI-2681738">
        <id>P43354</id>
    </interactant>
    <interactant intactId="EBI-2681773">
        <id>Q5H9L2</id>
        <label>TCEAL5</label>
    </interactant>
    <organismsDiffer>false</organismsDiffer>
    <experiments>2</experiments>
</comment>
<comment type="subcellular location">
    <subcellularLocation>
        <location evidence="9">Cytoplasm</location>
    </subcellularLocation>
    <subcellularLocation>
        <location evidence="8 9">Nucleus</location>
    </subcellularLocation>
    <text evidence="9">Mostly nuclear; oxidative stress promotes cytoplasmic localization.</text>
</comment>
<comment type="alternative products">
    <event type="alternative splicing"/>
    <isoform>
        <id>P43354-1</id>
        <name>1</name>
        <sequence type="displayed"/>
    </isoform>
    <isoform>
        <id>P43354-2</id>
        <name>2</name>
        <sequence type="described" ref="VSP_056057"/>
    </isoform>
</comment>
<comment type="tissue specificity">
    <text>Expressed in a number of cell lines of T-cell, B-cell and fibroblast origin. Strong expression in brain tissue.</text>
</comment>
<comment type="developmental stage">
    <text>Rapidly and only very transiently expressed after cell activation, during the G0-G1 transition of the cell cycle.</text>
</comment>
<comment type="domain">
    <text evidence="6">The ligand-binding domain (LBD) contains no cavity as a result of the tight packing of side chains from several bulky hydrophobic residues in the region normally occupied by ligands. NR4A2 lacks a 'classical' binding site for coactivators (PubMed:12774125).</text>
</comment>
<comment type="disease" evidence="10 11 12 13">
    <disease id="DI-06447">
        <name>Intellectual developmental disorder with language impairment and early-onset DOPA-responsive dystonia-parkinsonism</name>
        <acronym>IDLDP</acronym>
        <description>An autosomal dominant disorder characterized by global developmental delay affecting motor, cognitive, and speech domains apparent in early childhood or infancy. Most patients also show movement abnormalities, often hypotonia with later development of dopa-responsive dystonia or parkinsonism. About half of patients develop various types of seizures.</description>
        <dbReference type="MIM" id="619911"/>
    </disease>
    <text>The disease is caused by variants affecting the gene represented in this entry.</text>
</comment>
<comment type="similarity">
    <text evidence="16">Belongs to the nuclear hormone receptor family. NR4 subfamily.</text>
</comment>
<proteinExistence type="evidence at protein level"/>
<sequence length="598" mass="66591">MPCVQAQYGSSPQGASPASQSYSYHSSGEYSSDFLTPEFVKFSMDLTNTEITATTSLPSFSTFMDNYSTGYDVKPPCLYQMPLSGQQSSIKVEDIQMHNYQQHSHLPPQSEEMMPHSGSVYYKPSSPPTPTTPGFQVQHSPMWDDPGSLHNFHQNYVATTHMIEQRKTPVSRLSLFSFKQSPPGTPVSSCQMRFDGPLHVPMNPEPAGSHHVVDGQTFAVPNPIRKPASMGFPGLQIGHASQLLDTQVPSPPSRGSPSNEGLCAVCGDNAACQHYGVRTCEGCKGFFKRTVQKNAKYVCLANKNCPVDKRRRNRCQYCRFQKCLAVGMVKEVVRTDSLKGRRGRLPSKPKSPQEPSPPSPPVSLISALVRAHVDSNPAMTSLDYSRFQANPDYQMSGDDTQHIQQFYDLLTGSMEIIRGWAEKIPGFADLPKADQDLLFESAFLELFVLRLAYRSNPVEGKLIFCNGVVLHRLQCVRGFGEWIDSIVEFSSNLQNMNIDISAFSCIAALAMVTERHGLKEPKRVEELQNKIVNCLKDHVTFNNGGLNRPNYLSKLLGKLPELRTLCTQGLQRIFYLKLEDLVPPPAIIDKLFLDTLPF</sequence>
<keyword id="KW-0002">3D-structure</keyword>
<keyword id="KW-0025">Alternative splicing</keyword>
<keyword id="KW-0963">Cytoplasm</keyword>
<keyword id="KW-0225">Disease variant</keyword>
<keyword id="KW-0238">DNA-binding</keyword>
<keyword id="KW-1023">Dystonia</keyword>
<keyword id="KW-0991">Intellectual disability</keyword>
<keyword id="KW-0479">Metal-binding</keyword>
<keyword id="KW-0539">Nucleus</keyword>
<keyword id="KW-0908">Parkinsonism</keyword>
<keyword id="KW-1267">Proteomics identification</keyword>
<keyword id="KW-0675">Receptor</keyword>
<keyword id="KW-1185">Reference proteome</keyword>
<keyword id="KW-0804">Transcription</keyword>
<keyword id="KW-0805">Transcription regulation</keyword>
<keyword id="KW-0862">Zinc</keyword>
<keyword id="KW-0863">Zinc-finger</keyword>